<proteinExistence type="inferred from homology"/>
<name>EFTS_PECCP</name>
<feature type="chain" id="PRO_1000202248" description="Elongation factor Ts">
    <location>
        <begin position="1"/>
        <end position="283"/>
    </location>
</feature>
<feature type="region of interest" description="Involved in Mg(2+) ion dislocation from EF-Tu" evidence="1">
    <location>
        <begin position="80"/>
        <end position="83"/>
    </location>
</feature>
<keyword id="KW-0963">Cytoplasm</keyword>
<keyword id="KW-0251">Elongation factor</keyword>
<keyword id="KW-0648">Protein biosynthesis</keyword>
<accession>C6DAI4</accession>
<comment type="function">
    <text evidence="1">Associates with the EF-Tu.GDP complex and induces the exchange of GDP to GTP. It remains bound to the aminoacyl-tRNA.EF-Tu.GTP complex up to the GTP hydrolysis stage on the ribosome.</text>
</comment>
<comment type="subcellular location">
    <subcellularLocation>
        <location evidence="1">Cytoplasm</location>
    </subcellularLocation>
</comment>
<comment type="similarity">
    <text evidence="1">Belongs to the EF-Ts family.</text>
</comment>
<evidence type="ECO:0000255" key="1">
    <source>
        <dbReference type="HAMAP-Rule" id="MF_00050"/>
    </source>
</evidence>
<reference key="1">
    <citation type="submission" date="2009-07" db="EMBL/GenBank/DDBJ databases">
        <title>Complete sequence of Pectobacterium carotovorum subsp. carotovorum PC1.</title>
        <authorList>
            <consortium name="US DOE Joint Genome Institute"/>
            <person name="Lucas S."/>
            <person name="Copeland A."/>
            <person name="Lapidus A."/>
            <person name="Glavina del Rio T."/>
            <person name="Tice H."/>
            <person name="Bruce D."/>
            <person name="Goodwin L."/>
            <person name="Pitluck S."/>
            <person name="Munk A.C."/>
            <person name="Brettin T."/>
            <person name="Detter J.C."/>
            <person name="Han C."/>
            <person name="Tapia R."/>
            <person name="Larimer F."/>
            <person name="Land M."/>
            <person name="Hauser L."/>
            <person name="Kyrpides N."/>
            <person name="Mikhailova N."/>
            <person name="Balakrishnan V."/>
            <person name="Glasner J."/>
            <person name="Perna N.T."/>
        </authorList>
    </citation>
    <scope>NUCLEOTIDE SEQUENCE [LARGE SCALE GENOMIC DNA]</scope>
    <source>
        <strain>PC1</strain>
    </source>
</reference>
<dbReference type="EMBL" id="CP001657">
    <property type="protein sequence ID" value="ACT11992.1"/>
    <property type="molecule type" value="Genomic_DNA"/>
</dbReference>
<dbReference type="RefSeq" id="WP_012773630.1">
    <property type="nucleotide sequence ID" value="NC_012917.1"/>
</dbReference>
<dbReference type="SMR" id="C6DAI4"/>
<dbReference type="STRING" id="561230.PC1_0942"/>
<dbReference type="GeneID" id="67795281"/>
<dbReference type="KEGG" id="pct:PC1_0942"/>
<dbReference type="eggNOG" id="COG0264">
    <property type="taxonomic scope" value="Bacteria"/>
</dbReference>
<dbReference type="HOGENOM" id="CLU_047155_0_2_6"/>
<dbReference type="OrthoDB" id="9808348at2"/>
<dbReference type="Proteomes" id="UP000002736">
    <property type="component" value="Chromosome"/>
</dbReference>
<dbReference type="GO" id="GO:0005737">
    <property type="term" value="C:cytoplasm"/>
    <property type="evidence" value="ECO:0007669"/>
    <property type="project" value="UniProtKB-SubCell"/>
</dbReference>
<dbReference type="GO" id="GO:0003746">
    <property type="term" value="F:translation elongation factor activity"/>
    <property type="evidence" value="ECO:0007669"/>
    <property type="project" value="UniProtKB-UniRule"/>
</dbReference>
<dbReference type="CDD" id="cd14275">
    <property type="entry name" value="UBA_EF-Ts"/>
    <property type="match status" value="1"/>
</dbReference>
<dbReference type="FunFam" id="1.10.286.20:FF:000001">
    <property type="entry name" value="Elongation factor Ts"/>
    <property type="match status" value="1"/>
</dbReference>
<dbReference type="FunFam" id="1.10.8.10:FF:000001">
    <property type="entry name" value="Elongation factor Ts"/>
    <property type="match status" value="1"/>
</dbReference>
<dbReference type="FunFam" id="3.30.479.20:FF:000001">
    <property type="entry name" value="Elongation factor Ts"/>
    <property type="match status" value="1"/>
</dbReference>
<dbReference type="Gene3D" id="1.10.286.20">
    <property type="match status" value="1"/>
</dbReference>
<dbReference type="Gene3D" id="1.10.8.10">
    <property type="entry name" value="DNA helicase RuvA subunit, C-terminal domain"/>
    <property type="match status" value="1"/>
</dbReference>
<dbReference type="Gene3D" id="3.30.479.20">
    <property type="entry name" value="Elongation factor Ts, dimerisation domain"/>
    <property type="match status" value="2"/>
</dbReference>
<dbReference type="HAMAP" id="MF_00050">
    <property type="entry name" value="EF_Ts"/>
    <property type="match status" value="1"/>
</dbReference>
<dbReference type="InterPro" id="IPR036402">
    <property type="entry name" value="EF-Ts_dimer_sf"/>
</dbReference>
<dbReference type="InterPro" id="IPR001816">
    <property type="entry name" value="Transl_elong_EFTs/EF1B"/>
</dbReference>
<dbReference type="InterPro" id="IPR014039">
    <property type="entry name" value="Transl_elong_EFTs/EF1B_dimer"/>
</dbReference>
<dbReference type="InterPro" id="IPR018101">
    <property type="entry name" value="Transl_elong_Ts_CS"/>
</dbReference>
<dbReference type="InterPro" id="IPR009060">
    <property type="entry name" value="UBA-like_sf"/>
</dbReference>
<dbReference type="NCBIfam" id="TIGR00116">
    <property type="entry name" value="tsf"/>
    <property type="match status" value="1"/>
</dbReference>
<dbReference type="PANTHER" id="PTHR11741">
    <property type="entry name" value="ELONGATION FACTOR TS"/>
    <property type="match status" value="1"/>
</dbReference>
<dbReference type="PANTHER" id="PTHR11741:SF0">
    <property type="entry name" value="ELONGATION FACTOR TS, MITOCHONDRIAL"/>
    <property type="match status" value="1"/>
</dbReference>
<dbReference type="Pfam" id="PF00889">
    <property type="entry name" value="EF_TS"/>
    <property type="match status" value="1"/>
</dbReference>
<dbReference type="SUPFAM" id="SSF54713">
    <property type="entry name" value="Elongation factor Ts (EF-Ts), dimerisation domain"/>
    <property type="match status" value="2"/>
</dbReference>
<dbReference type="SUPFAM" id="SSF46934">
    <property type="entry name" value="UBA-like"/>
    <property type="match status" value="1"/>
</dbReference>
<dbReference type="PROSITE" id="PS01127">
    <property type="entry name" value="EF_TS_2"/>
    <property type="match status" value="1"/>
</dbReference>
<gene>
    <name evidence="1" type="primary">tsf</name>
    <name type="ordered locus">PC1_0942</name>
</gene>
<organism>
    <name type="scientific">Pectobacterium carotovorum subsp. carotovorum (strain PC1)</name>
    <dbReference type="NCBI Taxonomy" id="561230"/>
    <lineage>
        <taxon>Bacteria</taxon>
        <taxon>Pseudomonadati</taxon>
        <taxon>Pseudomonadota</taxon>
        <taxon>Gammaproteobacteria</taxon>
        <taxon>Enterobacterales</taxon>
        <taxon>Pectobacteriaceae</taxon>
        <taxon>Pectobacterium</taxon>
    </lineage>
</organism>
<protein>
    <recommendedName>
        <fullName evidence="1">Elongation factor Ts</fullName>
        <shortName evidence="1">EF-Ts</shortName>
    </recommendedName>
</protein>
<sequence>MAEITASLVKELRERTAAGMMECKKALVEANGDIELAIENMRKSGAIKAAKKAGNVAADGVIKTKIDGNYAVILEVNCQTDFVAKDGGFQAFADKVLDAAVAGKITDVDVLKAQFEEERVALVAKIGENINIRRVSALEGEVLGNYQHGARIGVLVAAKGADEELVKHLAMHVAASKPEFVKPEDVSAEVVDKEYQVQLEIAMQSGKPKEIAEKMVEGRMKKFTGEVSLTGQPFVMDPAKSVGQLLKEHNADVTNFIRFEVGEGIEKVETDFAAEVAAMSKQS</sequence>